<comment type="subcellular location">
    <subcellularLocation>
        <location evidence="1">Cell membrane</location>
        <topology evidence="1">Multi-pass membrane protein</topology>
    </subcellularLocation>
</comment>
<comment type="similarity">
    <text evidence="1">Belongs to the UPF0397 family.</text>
</comment>
<accession>A4VZK9</accession>
<feature type="chain" id="PRO_1000069203" description="UPF0397 protein SSU98_0390">
    <location>
        <begin position="1"/>
        <end position="181"/>
    </location>
</feature>
<feature type="transmembrane region" description="Helical" evidence="1">
    <location>
        <begin position="9"/>
        <end position="29"/>
    </location>
</feature>
<feature type="transmembrane region" description="Helical" evidence="1">
    <location>
        <begin position="46"/>
        <end position="66"/>
    </location>
</feature>
<feature type="transmembrane region" description="Helical" evidence="1">
    <location>
        <begin position="70"/>
        <end position="90"/>
    </location>
</feature>
<feature type="transmembrane region" description="Helical" evidence="1">
    <location>
        <begin position="108"/>
        <end position="128"/>
    </location>
</feature>
<feature type="transmembrane region" description="Helical" evidence="1">
    <location>
        <begin position="147"/>
        <end position="167"/>
    </location>
</feature>
<keyword id="KW-1003">Cell membrane</keyword>
<keyword id="KW-0472">Membrane</keyword>
<keyword id="KW-0812">Transmembrane</keyword>
<keyword id="KW-1133">Transmembrane helix</keyword>
<name>Y390_STRS2</name>
<gene>
    <name type="ordered locus">SSU98_0390</name>
</gene>
<proteinExistence type="inferred from homology"/>
<reference key="1">
    <citation type="journal article" date="2007" name="PLoS ONE">
        <title>A glimpse of streptococcal toxic shock syndrome from comparative genomics of S. suis 2 Chinese isolates.</title>
        <authorList>
            <person name="Chen C."/>
            <person name="Tang J."/>
            <person name="Dong W."/>
            <person name="Wang C."/>
            <person name="Feng Y."/>
            <person name="Wang J."/>
            <person name="Zheng F."/>
            <person name="Pan X."/>
            <person name="Liu D."/>
            <person name="Li M."/>
            <person name="Song Y."/>
            <person name="Zhu X."/>
            <person name="Sun H."/>
            <person name="Feng T."/>
            <person name="Guo Z."/>
            <person name="Ju A."/>
            <person name="Ge J."/>
            <person name="Dong Y."/>
            <person name="Sun W."/>
            <person name="Jiang Y."/>
            <person name="Wang J."/>
            <person name="Yan J."/>
            <person name="Yang H."/>
            <person name="Wang X."/>
            <person name="Gao G.F."/>
            <person name="Yang R."/>
            <person name="Wang J."/>
            <person name="Yu J."/>
        </authorList>
    </citation>
    <scope>NUCLEOTIDE SEQUENCE [LARGE SCALE GENOMIC DNA]</scope>
    <source>
        <strain>98HAH33</strain>
    </source>
</reference>
<protein>
    <recommendedName>
        <fullName evidence="1">UPF0397 protein SSU98_0390</fullName>
    </recommendedName>
</protein>
<evidence type="ECO:0000255" key="1">
    <source>
        <dbReference type="HAMAP-Rule" id="MF_01572"/>
    </source>
</evidence>
<organism>
    <name type="scientific">Streptococcus suis (strain 98HAH33)</name>
    <dbReference type="NCBI Taxonomy" id="391296"/>
    <lineage>
        <taxon>Bacteria</taxon>
        <taxon>Bacillati</taxon>
        <taxon>Bacillota</taxon>
        <taxon>Bacilli</taxon>
        <taxon>Lactobacillales</taxon>
        <taxon>Streptococcaceae</taxon>
        <taxon>Streptococcus</taxon>
    </lineage>
</organism>
<sequence>MKNNSIKTVVATGIGAALFVVIGHLINIPTFVPNTSIQLQYAVQSLLAVVFGPVVGFLVGFIGHTLKDSLTYGPWWSWILASGVFGLVVGLTKKRLRIQEGIFEGKDILFFNLVQIAANVLAWGVIAPVLDILIYSEAANKVFAQGLVAGIANSITIAIAGTLLLVVYAKSQTKTGSLSKD</sequence>
<dbReference type="EMBL" id="CP000408">
    <property type="protein sequence ID" value="ABP91548.1"/>
    <property type="molecule type" value="Genomic_DNA"/>
</dbReference>
<dbReference type="KEGG" id="ssv:SSU98_0390"/>
<dbReference type="HOGENOM" id="CLU_120023_0_0_9"/>
<dbReference type="BioCyc" id="SSUI391296:GI2E-428-MONOMER"/>
<dbReference type="GO" id="GO:0005886">
    <property type="term" value="C:plasma membrane"/>
    <property type="evidence" value="ECO:0007669"/>
    <property type="project" value="UniProtKB-SubCell"/>
</dbReference>
<dbReference type="Gene3D" id="1.10.1760.20">
    <property type="match status" value="1"/>
</dbReference>
<dbReference type="HAMAP" id="MF_01572">
    <property type="entry name" value="UPF0397"/>
    <property type="match status" value="1"/>
</dbReference>
<dbReference type="InterPro" id="IPR009825">
    <property type="entry name" value="ECF_substrate-spec-like"/>
</dbReference>
<dbReference type="InterPro" id="IPR022914">
    <property type="entry name" value="UPF0397"/>
</dbReference>
<dbReference type="NCBIfam" id="NF010182">
    <property type="entry name" value="PRK13661.1"/>
    <property type="match status" value="1"/>
</dbReference>
<dbReference type="PANTHER" id="PTHR37815">
    <property type="entry name" value="UPF0397 PROTEIN BC_2624-RELATED"/>
    <property type="match status" value="1"/>
</dbReference>
<dbReference type="PANTHER" id="PTHR37815:SF3">
    <property type="entry name" value="UPF0397 PROTEIN SPR0429"/>
    <property type="match status" value="1"/>
</dbReference>
<dbReference type="Pfam" id="PF07155">
    <property type="entry name" value="ECF-ribofla_trS"/>
    <property type="match status" value="1"/>
</dbReference>